<protein>
    <recommendedName>
        <fullName evidence="1">Ribosome maturation factor RimP</fullName>
    </recommendedName>
</protein>
<name>RIMP_ANASK</name>
<feature type="chain" id="PRO_0000384602" description="Ribosome maturation factor RimP">
    <location>
        <begin position="1"/>
        <end position="171"/>
    </location>
</feature>
<gene>
    <name evidence="1" type="primary">rimP</name>
    <name type="ordered locus">AnaeK_1159</name>
</gene>
<dbReference type="EMBL" id="CP001131">
    <property type="protein sequence ID" value="ACG72392.1"/>
    <property type="molecule type" value="Genomic_DNA"/>
</dbReference>
<dbReference type="RefSeq" id="WP_012525218.1">
    <property type="nucleotide sequence ID" value="NC_011145.1"/>
</dbReference>
<dbReference type="SMR" id="B4UHF7"/>
<dbReference type="KEGG" id="ank:AnaeK_1159"/>
<dbReference type="HOGENOM" id="CLU_070525_2_2_7"/>
<dbReference type="OrthoDB" id="9805006at2"/>
<dbReference type="Proteomes" id="UP000001871">
    <property type="component" value="Chromosome"/>
</dbReference>
<dbReference type="GO" id="GO:0005829">
    <property type="term" value="C:cytosol"/>
    <property type="evidence" value="ECO:0007669"/>
    <property type="project" value="TreeGrafter"/>
</dbReference>
<dbReference type="GO" id="GO:0000028">
    <property type="term" value="P:ribosomal small subunit assembly"/>
    <property type="evidence" value="ECO:0007669"/>
    <property type="project" value="TreeGrafter"/>
</dbReference>
<dbReference type="GO" id="GO:0006412">
    <property type="term" value="P:translation"/>
    <property type="evidence" value="ECO:0007669"/>
    <property type="project" value="TreeGrafter"/>
</dbReference>
<dbReference type="CDD" id="cd01734">
    <property type="entry name" value="YlxS_C"/>
    <property type="match status" value="1"/>
</dbReference>
<dbReference type="FunFam" id="3.30.300.70:FF:000001">
    <property type="entry name" value="Ribosome maturation factor RimP"/>
    <property type="match status" value="1"/>
</dbReference>
<dbReference type="Gene3D" id="2.30.30.180">
    <property type="entry name" value="Ribosome maturation factor RimP, C-terminal domain"/>
    <property type="match status" value="1"/>
</dbReference>
<dbReference type="Gene3D" id="3.30.300.70">
    <property type="entry name" value="RimP-like superfamily, N-terminal"/>
    <property type="match status" value="1"/>
</dbReference>
<dbReference type="HAMAP" id="MF_01077">
    <property type="entry name" value="RimP"/>
    <property type="match status" value="1"/>
</dbReference>
<dbReference type="InterPro" id="IPR003728">
    <property type="entry name" value="Ribosome_maturation_RimP"/>
</dbReference>
<dbReference type="InterPro" id="IPR028998">
    <property type="entry name" value="RimP_C"/>
</dbReference>
<dbReference type="InterPro" id="IPR036847">
    <property type="entry name" value="RimP_C_sf"/>
</dbReference>
<dbReference type="InterPro" id="IPR028989">
    <property type="entry name" value="RimP_N"/>
</dbReference>
<dbReference type="InterPro" id="IPR035956">
    <property type="entry name" value="RimP_N_sf"/>
</dbReference>
<dbReference type="PANTHER" id="PTHR33867">
    <property type="entry name" value="RIBOSOME MATURATION FACTOR RIMP"/>
    <property type="match status" value="1"/>
</dbReference>
<dbReference type="PANTHER" id="PTHR33867:SF1">
    <property type="entry name" value="RIBOSOME MATURATION FACTOR RIMP"/>
    <property type="match status" value="1"/>
</dbReference>
<dbReference type="Pfam" id="PF17384">
    <property type="entry name" value="DUF150_C"/>
    <property type="match status" value="1"/>
</dbReference>
<dbReference type="Pfam" id="PF02576">
    <property type="entry name" value="RimP_N"/>
    <property type="match status" value="1"/>
</dbReference>
<dbReference type="SUPFAM" id="SSF74942">
    <property type="entry name" value="YhbC-like, C-terminal domain"/>
    <property type="match status" value="1"/>
</dbReference>
<dbReference type="SUPFAM" id="SSF75420">
    <property type="entry name" value="YhbC-like, N-terminal domain"/>
    <property type="match status" value="1"/>
</dbReference>
<evidence type="ECO:0000255" key="1">
    <source>
        <dbReference type="HAMAP-Rule" id="MF_01077"/>
    </source>
</evidence>
<comment type="function">
    <text evidence="1">Required for maturation of 30S ribosomal subunits.</text>
</comment>
<comment type="subcellular location">
    <subcellularLocation>
        <location evidence="1">Cytoplasm</location>
    </subcellularLocation>
</comment>
<comment type="similarity">
    <text evidence="1">Belongs to the RimP family.</text>
</comment>
<sequence>MTGIGEQSIAEQVRSLLEPVLERDGYELVEVEWARLAGRWTLRVFIDKAGGVGIDDCQAVSKTVEPILDVADVIEPAYDLEVSSPGLDRPLRKPRDFDRYAGQRVHVKAYGPVAGTAPGAPARKHWTGVLKGFRDGAVELDVDGVLHRVPHDQIAKANLEYDVEGDLRRKD</sequence>
<reference key="1">
    <citation type="submission" date="2008-08" db="EMBL/GenBank/DDBJ databases">
        <title>Complete sequence of Anaeromyxobacter sp. K.</title>
        <authorList>
            <consortium name="US DOE Joint Genome Institute"/>
            <person name="Lucas S."/>
            <person name="Copeland A."/>
            <person name="Lapidus A."/>
            <person name="Glavina del Rio T."/>
            <person name="Dalin E."/>
            <person name="Tice H."/>
            <person name="Bruce D."/>
            <person name="Goodwin L."/>
            <person name="Pitluck S."/>
            <person name="Saunders E."/>
            <person name="Brettin T."/>
            <person name="Detter J.C."/>
            <person name="Han C."/>
            <person name="Larimer F."/>
            <person name="Land M."/>
            <person name="Hauser L."/>
            <person name="Kyrpides N."/>
            <person name="Ovchinnikiva G."/>
            <person name="Beliaev A."/>
        </authorList>
    </citation>
    <scope>NUCLEOTIDE SEQUENCE [LARGE SCALE GENOMIC DNA]</scope>
    <source>
        <strain>K</strain>
    </source>
</reference>
<accession>B4UHF7</accession>
<organism>
    <name type="scientific">Anaeromyxobacter sp. (strain K)</name>
    <dbReference type="NCBI Taxonomy" id="447217"/>
    <lineage>
        <taxon>Bacteria</taxon>
        <taxon>Pseudomonadati</taxon>
        <taxon>Myxococcota</taxon>
        <taxon>Myxococcia</taxon>
        <taxon>Myxococcales</taxon>
        <taxon>Cystobacterineae</taxon>
        <taxon>Anaeromyxobacteraceae</taxon>
        <taxon>Anaeromyxobacter</taxon>
    </lineage>
</organism>
<proteinExistence type="inferred from homology"/>
<keyword id="KW-0963">Cytoplasm</keyword>
<keyword id="KW-0690">Ribosome biogenesis</keyword>